<reference key="1">
    <citation type="submission" date="2006-12" db="EMBL/GenBank/DDBJ databases">
        <title>Complete sequence of Acidovorax avenae subsp. citrulli AAC00-1.</title>
        <authorList>
            <person name="Copeland A."/>
            <person name="Lucas S."/>
            <person name="Lapidus A."/>
            <person name="Barry K."/>
            <person name="Detter J.C."/>
            <person name="Glavina del Rio T."/>
            <person name="Dalin E."/>
            <person name="Tice H."/>
            <person name="Pitluck S."/>
            <person name="Kiss H."/>
            <person name="Brettin T."/>
            <person name="Bruce D."/>
            <person name="Han C."/>
            <person name="Tapia R."/>
            <person name="Gilna P."/>
            <person name="Schmutz J."/>
            <person name="Larimer F."/>
            <person name="Land M."/>
            <person name="Hauser L."/>
            <person name="Kyrpides N."/>
            <person name="Kim E."/>
            <person name="Stahl D."/>
            <person name="Richardson P."/>
        </authorList>
    </citation>
    <scope>NUCLEOTIDE SEQUENCE [LARGE SCALE GENOMIC DNA]</scope>
    <source>
        <strain>AAC00-1</strain>
    </source>
</reference>
<keyword id="KW-0028">Amino-acid biosynthesis</keyword>
<keyword id="KW-0055">Arginine biosynthesis</keyword>
<keyword id="KW-0963">Cytoplasm</keyword>
<keyword id="KW-0808">Transferase</keyword>
<evidence type="ECO:0000250" key="1"/>
<evidence type="ECO:0000255" key="2">
    <source>
        <dbReference type="HAMAP-Rule" id="MF_01109"/>
    </source>
</evidence>
<sequence>MKAPSDMKHYLQFKDFSAQEYAYLFERAAVIKGKFKRYEKHHPLTDRTLAMIFEKASTRTRVSFEAGMYQLGGSVVHLTTGDSQLGRAEPIEDSAKVISRMVDLVMIRTYEQTKIERFAAHSRVPVINGLTNEFHPCQILADIFTFIEHRGSIQGRTVAWVGDGNNMANTWLQAAELLGFTVHVSTPSGYEVDSRVAGVAAGSHYKVFSDPLEACRGADLITTDVWTSMGYEAENEARKKAFADWCVDAEMMAAARPEALFMHCLPAHRGEEVEADVIDGPQSVVWDEAENRMHVQKALMEYLLLGQVA</sequence>
<comment type="function">
    <text evidence="1">Reversibly catalyzes the transfer of the carbamoyl group from carbamoyl phosphate (CP) to the N(epsilon) atom of ornithine (ORN) to produce L-citrulline.</text>
</comment>
<comment type="catalytic activity">
    <reaction evidence="2">
        <text>carbamoyl phosphate + L-ornithine = L-citrulline + phosphate + H(+)</text>
        <dbReference type="Rhea" id="RHEA:19513"/>
        <dbReference type="ChEBI" id="CHEBI:15378"/>
        <dbReference type="ChEBI" id="CHEBI:43474"/>
        <dbReference type="ChEBI" id="CHEBI:46911"/>
        <dbReference type="ChEBI" id="CHEBI:57743"/>
        <dbReference type="ChEBI" id="CHEBI:58228"/>
        <dbReference type="EC" id="2.1.3.3"/>
    </reaction>
</comment>
<comment type="pathway">
    <text evidence="2">Amino-acid biosynthesis; L-arginine biosynthesis; L-arginine from L-ornithine and carbamoyl phosphate: step 1/3.</text>
</comment>
<comment type="subcellular location">
    <subcellularLocation>
        <location evidence="2">Cytoplasm</location>
    </subcellularLocation>
</comment>
<comment type="similarity">
    <text evidence="2">Belongs to the aspartate/ornithine carbamoyltransferase superfamily. OTCase family.</text>
</comment>
<gene>
    <name evidence="2" type="primary">argF</name>
    <name type="ordered locus">Aave_1163</name>
</gene>
<dbReference type="EC" id="2.1.3.3" evidence="2"/>
<dbReference type="EMBL" id="CP000512">
    <property type="protein sequence ID" value="ABM31755.1"/>
    <property type="molecule type" value="Genomic_DNA"/>
</dbReference>
<dbReference type="RefSeq" id="WP_011794308.1">
    <property type="nucleotide sequence ID" value="NC_008752.1"/>
</dbReference>
<dbReference type="SMR" id="A1TLB7"/>
<dbReference type="STRING" id="397945.Aave_1163"/>
<dbReference type="KEGG" id="aav:Aave_1163"/>
<dbReference type="eggNOG" id="COG0078">
    <property type="taxonomic scope" value="Bacteria"/>
</dbReference>
<dbReference type="HOGENOM" id="CLU_043846_3_2_4"/>
<dbReference type="OrthoDB" id="9802587at2"/>
<dbReference type="UniPathway" id="UPA00068">
    <property type="reaction ID" value="UER00112"/>
</dbReference>
<dbReference type="Proteomes" id="UP000002596">
    <property type="component" value="Chromosome"/>
</dbReference>
<dbReference type="GO" id="GO:0005737">
    <property type="term" value="C:cytoplasm"/>
    <property type="evidence" value="ECO:0007669"/>
    <property type="project" value="UniProtKB-SubCell"/>
</dbReference>
<dbReference type="GO" id="GO:0016597">
    <property type="term" value="F:amino acid binding"/>
    <property type="evidence" value="ECO:0007669"/>
    <property type="project" value="InterPro"/>
</dbReference>
<dbReference type="GO" id="GO:0004585">
    <property type="term" value="F:ornithine carbamoyltransferase activity"/>
    <property type="evidence" value="ECO:0007669"/>
    <property type="project" value="UniProtKB-UniRule"/>
</dbReference>
<dbReference type="GO" id="GO:0042450">
    <property type="term" value="P:arginine biosynthetic process via ornithine"/>
    <property type="evidence" value="ECO:0007669"/>
    <property type="project" value="TreeGrafter"/>
</dbReference>
<dbReference type="GO" id="GO:0019240">
    <property type="term" value="P:citrulline biosynthetic process"/>
    <property type="evidence" value="ECO:0007669"/>
    <property type="project" value="TreeGrafter"/>
</dbReference>
<dbReference type="GO" id="GO:0006526">
    <property type="term" value="P:L-arginine biosynthetic process"/>
    <property type="evidence" value="ECO:0007669"/>
    <property type="project" value="UniProtKB-UniRule"/>
</dbReference>
<dbReference type="FunFam" id="3.40.50.1370:FF:000008">
    <property type="entry name" value="Ornithine carbamoyltransferase"/>
    <property type="match status" value="1"/>
</dbReference>
<dbReference type="Gene3D" id="3.40.50.1370">
    <property type="entry name" value="Aspartate/ornithine carbamoyltransferase"/>
    <property type="match status" value="2"/>
</dbReference>
<dbReference type="HAMAP" id="MF_01109">
    <property type="entry name" value="OTCase"/>
    <property type="match status" value="1"/>
</dbReference>
<dbReference type="InterPro" id="IPR006132">
    <property type="entry name" value="Asp/Orn_carbamoyltranf_P-bd"/>
</dbReference>
<dbReference type="InterPro" id="IPR006130">
    <property type="entry name" value="Asp/Orn_carbamoylTrfase"/>
</dbReference>
<dbReference type="InterPro" id="IPR036901">
    <property type="entry name" value="Asp/Orn_carbamoylTrfase_sf"/>
</dbReference>
<dbReference type="InterPro" id="IPR006131">
    <property type="entry name" value="Asp_carbamoyltransf_Asp/Orn-bd"/>
</dbReference>
<dbReference type="InterPro" id="IPR002292">
    <property type="entry name" value="Orn/put_carbamltrans"/>
</dbReference>
<dbReference type="InterPro" id="IPR024904">
    <property type="entry name" value="OTCase_ArgI"/>
</dbReference>
<dbReference type="NCBIfam" id="TIGR00658">
    <property type="entry name" value="orni_carb_tr"/>
    <property type="match status" value="1"/>
</dbReference>
<dbReference type="NCBIfam" id="NF001986">
    <property type="entry name" value="PRK00779.1"/>
    <property type="match status" value="1"/>
</dbReference>
<dbReference type="PANTHER" id="PTHR45753">
    <property type="entry name" value="ORNITHINE CARBAMOYLTRANSFERASE, MITOCHONDRIAL"/>
    <property type="match status" value="1"/>
</dbReference>
<dbReference type="PANTHER" id="PTHR45753:SF3">
    <property type="entry name" value="ORNITHINE TRANSCARBAMYLASE, MITOCHONDRIAL"/>
    <property type="match status" value="1"/>
</dbReference>
<dbReference type="Pfam" id="PF00185">
    <property type="entry name" value="OTCace"/>
    <property type="match status" value="1"/>
</dbReference>
<dbReference type="Pfam" id="PF02729">
    <property type="entry name" value="OTCace_N"/>
    <property type="match status" value="1"/>
</dbReference>
<dbReference type="PRINTS" id="PR00100">
    <property type="entry name" value="AOTCASE"/>
</dbReference>
<dbReference type="PRINTS" id="PR00102">
    <property type="entry name" value="OTCASE"/>
</dbReference>
<dbReference type="SUPFAM" id="SSF53671">
    <property type="entry name" value="Aspartate/ornithine carbamoyltransferase"/>
    <property type="match status" value="1"/>
</dbReference>
<dbReference type="PROSITE" id="PS00097">
    <property type="entry name" value="CARBAMOYLTRANSFERASE"/>
    <property type="match status" value="1"/>
</dbReference>
<accession>A1TLB7</accession>
<feature type="chain" id="PRO_1000065069" description="Ornithine carbamoyltransferase">
    <location>
        <begin position="1"/>
        <end position="309"/>
    </location>
</feature>
<feature type="binding site" evidence="2">
    <location>
        <begin position="57"/>
        <end position="60"/>
    </location>
    <ligand>
        <name>carbamoyl phosphate</name>
        <dbReference type="ChEBI" id="CHEBI:58228"/>
    </ligand>
</feature>
<feature type="binding site" evidence="2">
    <location>
        <position position="84"/>
    </location>
    <ligand>
        <name>carbamoyl phosphate</name>
        <dbReference type="ChEBI" id="CHEBI:58228"/>
    </ligand>
</feature>
<feature type="binding site" evidence="2">
    <location>
        <position position="108"/>
    </location>
    <ligand>
        <name>carbamoyl phosphate</name>
        <dbReference type="ChEBI" id="CHEBI:58228"/>
    </ligand>
</feature>
<feature type="binding site" evidence="2">
    <location>
        <begin position="135"/>
        <end position="138"/>
    </location>
    <ligand>
        <name>carbamoyl phosphate</name>
        <dbReference type="ChEBI" id="CHEBI:58228"/>
    </ligand>
</feature>
<feature type="binding site" evidence="2">
    <location>
        <position position="166"/>
    </location>
    <ligand>
        <name>L-ornithine</name>
        <dbReference type="ChEBI" id="CHEBI:46911"/>
    </ligand>
</feature>
<feature type="binding site" evidence="2">
    <location>
        <position position="224"/>
    </location>
    <ligand>
        <name>L-ornithine</name>
        <dbReference type="ChEBI" id="CHEBI:46911"/>
    </ligand>
</feature>
<feature type="binding site" evidence="2">
    <location>
        <begin position="228"/>
        <end position="229"/>
    </location>
    <ligand>
        <name>L-ornithine</name>
        <dbReference type="ChEBI" id="CHEBI:46911"/>
    </ligand>
</feature>
<feature type="binding site" evidence="2">
    <location>
        <begin position="264"/>
        <end position="265"/>
    </location>
    <ligand>
        <name>carbamoyl phosphate</name>
        <dbReference type="ChEBI" id="CHEBI:58228"/>
    </ligand>
</feature>
<feature type="binding site" evidence="2">
    <location>
        <position position="292"/>
    </location>
    <ligand>
        <name>carbamoyl phosphate</name>
        <dbReference type="ChEBI" id="CHEBI:58228"/>
    </ligand>
</feature>
<name>OTC_PARC0</name>
<protein>
    <recommendedName>
        <fullName evidence="2">Ornithine carbamoyltransferase</fullName>
        <shortName evidence="2">OTCase</shortName>
        <ecNumber evidence="2">2.1.3.3</ecNumber>
    </recommendedName>
</protein>
<organism>
    <name type="scientific">Paracidovorax citrulli (strain AAC00-1)</name>
    <name type="common">Acidovorax citrulli</name>
    <dbReference type="NCBI Taxonomy" id="397945"/>
    <lineage>
        <taxon>Bacteria</taxon>
        <taxon>Pseudomonadati</taxon>
        <taxon>Pseudomonadota</taxon>
        <taxon>Betaproteobacteria</taxon>
        <taxon>Burkholderiales</taxon>
        <taxon>Comamonadaceae</taxon>
        <taxon>Paracidovorax</taxon>
    </lineage>
</organism>
<proteinExistence type="inferred from homology"/>